<gene>
    <name evidence="1" type="primary">fabZ</name>
    <name type="ordered locus">Csal_0574</name>
</gene>
<comment type="function">
    <text evidence="1">Involved in unsaturated fatty acids biosynthesis. Catalyzes the dehydration of short chain beta-hydroxyacyl-ACPs and long chain saturated and unsaturated beta-hydroxyacyl-ACPs.</text>
</comment>
<comment type="catalytic activity">
    <reaction evidence="1">
        <text>a (3R)-hydroxyacyl-[ACP] = a (2E)-enoyl-[ACP] + H2O</text>
        <dbReference type="Rhea" id="RHEA:13097"/>
        <dbReference type="Rhea" id="RHEA-COMP:9925"/>
        <dbReference type="Rhea" id="RHEA-COMP:9945"/>
        <dbReference type="ChEBI" id="CHEBI:15377"/>
        <dbReference type="ChEBI" id="CHEBI:78784"/>
        <dbReference type="ChEBI" id="CHEBI:78827"/>
        <dbReference type="EC" id="4.2.1.59"/>
    </reaction>
</comment>
<comment type="subcellular location">
    <subcellularLocation>
        <location evidence="1">Cytoplasm</location>
    </subcellularLocation>
</comment>
<comment type="similarity">
    <text evidence="1">Belongs to the thioester dehydratase family. FabZ subfamily.</text>
</comment>
<comment type="sequence caution" evidence="2">
    <conflict type="erroneous initiation">
        <sequence resource="EMBL-CDS" id="ABE57936"/>
    </conflict>
</comment>
<dbReference type="EC" id="4.2.1.59" evidence="1"/>
<dbReference type="EMBL" id="CP000285">
    <property type="protein sequence ID" value="ABE57936.1"/>
    <property type="status" value="ALT_INIT"/>
    <property type="molecule type" value="Genomic_DNA"/>
</dbReference>
<dbReference type="RefSeq" id="WP_011505882.1">
    <property type="nucleotide sequence ID" value="NC_007963.1"/>
</dbReference>
<dbReference type="SMR" id="Q1R022"/>
<dbReference type="STRING" id="290398.Csal_0574"/>
<dbReference type="GeneID" id="95333330"/>
<dbReference type="KEGG" id="csa:Csal_0574"/>
<dbReference type="eggNOG" id="COG0764">
    <property type="taxonomic scope" value="Bacteria"/>
</dbReference>
<dbReference type="HOGENOM" id="CLU_078912_1_0_6"/>
<dbReference type="OrthoDB" id="9772788at2"/>
<dbReference type="Proteomes" id="UP000000239">
    <property type="component" value="Chromosome"/>
</dbReference>
<dbReference type="GO" id="GO:0005737">
    <property type="term" value="C:cytoplasm"/>
    <property type="evidence" value="ECO:0007669"/>
    <property type="project" value="UniProtKB-SubCell"/>
</dbReference>
<dbReference type="GO" id="GO:0016020">
    <property type="term" value="C:membrane"/>
    <property type="evidence" value="ECO:0007669"/>
    <property type="project" value="GOC"/>
</dbReference>
<dbReference type="GO" id="GO:0019171">
    <property type="term" value="F:(3R)-hydroxyacyl-[acyl-carrier-protein] dehydratase activity"/>
    <property type="evidence" value="ECO:0007669"/>
    <property type="project" value="UniProtKB-EC"/>
</dbReference>
<dbReference type="GO" id="GO:0006633">
    <property type="term" value="P:fatty acid biosynthetic process"/>
    <property type="evidence" value="ECO:0007669"/>
    <property type="project" value="UniProtKB-UniRule"/>
</dbReference>
<dbReference type="GO" id="GO:0009245">
    <property type="term" value="P:lipid A biosynthetic process"/>
    <property type="evidence" value="ECO:0007669"/>
    <property type="project" value="UniProtKB-UniRule"/>
</dbReference>
<dbReference type="CDD" id="cd01288">
    <property type="entry name" value="FabZ"/>
    <property type="match status" value="1"/>
</dbReference>
<dbReference type="FunFam" id="3.10.129.10:FF:000001">
    <property type="entry name" value="3-hydroxyacyl-[acyl-carrier-protein] dehydratase FabZ"/>
    <property type="match status" value="1"/>
</dbReference>
<dbReference type="Gene3D" id="3.10.129.10">
    <property type="entry name" value="Hotdog Thioesterase"/>
    <property type="match status" value="1"/>
</dbReference>
<dbReference type="HAMAP" id="MF_00406">
    <property type="entry name" value="FabZ"/>
    <property type="match status" value="1"/>
</dbReference>
<dbReference type="InterPro" id="IPR013114">
    <property type="entry name" value="FabA_FabZ"/>
</dbReference>
<dbReference type="InterPro" id="IPR010084">
    <property type="entry name" value="FabZ"/>
</dbReference>
<dbReference type="InterPro" id="IPR029069">
    <property type="entry name" value="HotDog_dom_sf"/>
</dbReference>
<dbReference type="NCBIfam" id="TIGR01750">
    <property type="entry name" value="fabZ"/>
    <property type="match status" value="1"/>
</dbReference>
<dbReference type="NCBIfam" id="NF000582">
    <property type="entry name" value="PRK00006.1"/>
    <property type="match status" value="1"/>
</dbReference>
<dbReference type="PANTHER" id="PTHR30272">
    <property type="entry name" value="3-HYDROXYACYL-[ACYL-CARRIER-PROTEIN] DEHYDRATASE"/>
    <property type="match status" value="1"/>
</dbReference>
<dbReference type="PANTHER" id="PTHR30272:SF1">
    <property type="entry name" value="3-HYDROXYACYL-[ACYL-CARRIER-PROTEIN] DEHYDRATASE"/>
    <property type="match status" value="1"/>
</dbReference>
<dbReference type="Pfam" id="PF07977">
    <property type="entry name" value="FabA"/>
    <property type="match status" value="1"/>
</dbReference>
<dbReference type="SUPFAM" id="SSF54637">
    <property type="entry name" value="Thioesterase/thiol ester dehydrase-isomerase"/>
    <property type="match status" value="1"/>
</dbReference>
<accession>Q1R022</accession>
<name>FABZ_CHRSD</name>
<keyword id="KW-0963">Cytoplasm</keyword>
<keyword id="KW-0441">Lipid A biosynthesis</keyword>
<keyword id="KW-0444">Lipid biosynthesis</keyword>
<keyword id="KW-0443">Lipid metabolism</keyword>
<keyword id="KW-0456">Lyase</keyword>
<keyword id="KW-1185">Reference proteome</keyword>
<organism>
    <name type="scientific">Chromohalobacter salexigens (strain ATCC BAA-138 / DSM 3043 / CIP 106854 / NCIMB 13768 / 1H11)</name>
    <dbReference type="NCBI Taxonomy" id="290398"/>
    <lineage>
        <taxon>Bacteria</taxon>
        <taxon>Pseudomonadati</taxon>
        <taxon>Pseudomonadota</taxon>
        <taxon>Gammaproteobacteria</taxon>
        <taxon>Oceanospirillales</taxon>
        <taxon>Halomonadaceae</taxon>
        <taxon>Chromohalobacter</taxon>
    </lineage>
</organism>
<proteinExistence type="inferred from homology"/>
<protein>
    <recommendedName>
        <fullName evidence="1">3-hydroxyacyl-[acyl-carrier-protein] dehydratase FabZ</fullName>
        <ecNumber evidence="1">4.2.1.59</ecNumber>
    </recommendedName>
    <alternativeName>
        <fullName evidence="1">(3R)-hydroxymyristoyl-[acyl-carrier-protein] dehydratase</fullName>
        <shortName evidence="1">(3R)-hydroxymyristoyl-ACP dehydrase</shortName>
    </alternativeName>
    <alternativeName>
        <fullName evidence="1">Beta-hydroxyacyl-ACP dehydratase</fullName>
    </alternativeName>
</protein>
<reference key="1">
    <citation type="journal article" date="2011" name="Stand. Genomic Sci.">
        <title>Complete genome sequence of the halophilic and highly halotolerant Chromohalobacter salexigens type strain (1H11(T)).</title>
        <authorList>
            <person name="Copeland A."/>
            <person name="O'Connor K."/>
            <person name="Lucas S."/>
            <person name="Lapidus A."/>
            <person name="Berry K.W."/>
            <person name="Detter J.C."/>
            <person name="Del Rio T.G."/>
            <person name="Hammon N."/>
            <person name="Dalin E."/>
            <person name="Tice H."/>
            <person name="Pitluck S."/>
            <person name="Bruce D."/>
            <person name="Goodwin L."/>
            <person name="Han C."/>
            <person name="Tapia R."/>
            <person name="Saunders E."/>
            <person name="Schmutz J."/>
            <person name="Brettin T."/>
            <person name="Larimer F."/>
            <person name="Land M."/>
            <person name="Hauser L."/>
            <person name="Vargas C."/>
            <person name="Nieto J.J."/>
            <person name="Kyrpides N.C."/>
            <person name="Ivanova N."/>
            <person name="Goker M."/>
            <person name="Klenk H.P."/>
            <person name="Csonka L.N."/>
            <person name="Woyke T."/>
        </authorList>
    </citation>
    <scope>NUCLEOTIDE SEQUENCE [LARGE SCALE GENOMIC DNA]</scope>
    <source>
        <strain>ATCC BAA-138 / DSM 3043 / CIP 106854 / NCIMB 13768 / 1H11</strain>
    </source>
</reference>
<sequence>MDINEIREYLPHRYPFLLVDRVTEITLGETIVAYKNVSINEPFFNGHFPHHPIMPGVLIIEAMAQACGILGFKTVNKLPADGYVYYLVGSDNVRFKRPVMPGDQLRLEANVIRGKRGIWKFACRATVDGELACEAEIICAERKVA</sequence>
<evidence type="ECO:0000255" key="1">
    <source>
        <dbReference type="HAMAP-Rule" id="MF_00406"/>
    </source>
</evidence>
<evidence type="ECO:0000305" key="2"/>
<feature type="chain" id="PRO_0000340765" description="3-hydroxyacyl-[acyl-carrier-protein] dehydratase FabZ">
    <location>
        <begin position="1"/>
        <end position="145"/>
    </location>
</feature>
<feature type="active site" evidence="1">
    <location>
        <position position="47"/>
    </location>
</feature>